<sequence length="338" mass="37350">MDEPACNGTSNEWQRPQLIVAGPRAARRRQMLASLDLNTLLALEALLEHRNVTQAARHLGLSQPSVSRALIRLRGVFNDDLLVRGSSGMVPTPHAQRLGQMLPPVLDSIRGMVDPGLDQGEWRLTARMAMPDHQAIVLLPPFLPLMRERAPNLDIVTDSLLALRRLEQGEIDLAVGQIGEAPPGYFRRRLYNDRFACLLRNGHPALEQESIIDTFSALRHAAIASDTKDGFGRVHDDLVKLDLQDPDPVLVSNVLTAGLAIVSTDLVLVVPRRVATRNAALLPLVIVDPPVELPPYEVALIWHERCHRDPDHRWLRQEIAAAATATEQGQSTDAASRQ</sequence>
<evidence type="ECO:0000255" key="1">
    <source>
        <dbReference type="PROSITE-ProRule" id="PRU00253"/>
    </source>
</evidence>
<evidence type="ECO:0000305" key="2"/>
<name>SYRM1_SINFN</name>
<comment type="function">
    <text>Transcriptional activator that regulates the expression of genes involved in symbiosis. Among other targets it acts on the nolWBTUV operon.</text>
</comment>
<comment type="similarity">
    <text evidence="2">Belongs to the LysR transcriptional regulatory family.</text>
</comment>
<reference key="1">
    <citation type="journal article" date="1997" name="Nature">
        <title>Molecular basis of symbiosis between Rhizobium and legumes.</title>
        <authorList>
            <person name="Freiberg C.A."/>
            <person name="Fellay R."/>
            <person name="Bairoch A."/>
            <person name="Broughton W.J."/>
            <person name="Rosenthal A."/>
            <person name="Perret X."/>
        </authorList>
    </citation>
    <scope>NUCLEOTIDE SEQUENCE [LARGE SCALE GENOMIC DNA]</scope>
    <source>
        <strain>NBRC 101917 / NGR234</strain>
    </source>
</reference>
<reference key="2">
    <citation type="journal article" date="2009" name="Appl. Environ. Microbiol.">
        <title>Rhizobium sp. strain NGR234 possesses a remarkable number of secretion systems.</title>
        <authorList>
            <person name="Schmeisser C."/>
            <person name="Liesegang H."/>
            <person name="Krysciak D."/>
            <person name="Bakkou N."/>
            <person name="Le Quere A."/>
            <person name="Wollherr A."/>
            <person name="Heinemeyer I."/>
            <person name="Morgenstern B."/>
            <person name="Pommerening-Roeser A."/>
            <person name="Flores M."/>
            <person name="Palacios R."/>
            <person name="Brenner S."/>
            <person name="Gottschalk G."/>
            <person name="Schmitz R.A."/>
            <person name="Broughton W.J."/>
            <person name="Perret X."/>
            <person name="Strittmatter A.W."/>
            <person name="Streit W.R."/>
        </authorList>
    </citation>
    <scope>NUCLEOTIDE SEQUENCE [LARGE SCALE GENOMIC DNA]</scope>
    <source>
        <strain>NBRC 101917 / NGR234</strain>
    </source>
</reference>
<reference key="3">
    <citation type="journal article" date="1998" name="Mol. Plant Microbe Interact.">
        <title>SyrM1 of Rhizobium sp. NGR234 activates transcription of symbiotic loci and controls the level of sulfated Nod factors.</title>
        <authorList>
            <person name="Hanin M."/>
            <person name="Jabbouri S."/>
            <person name="Broughton W.J."/>
            <person name="Fellay R."/>
        </authorList>
    </citation>
    <scope>CHARACTERIZATION</scope>
</reference>
<gene>
    <name type="primary">syrM1</name>
    <name type="ordered locus">NGR_a01980</name>
    <name type="ORF">y4pN</name>
</gene>
<proteinExistence type="evidence at protein level"/>
<keyword id="KW-0010">Activator</keyword>
<keyword id="KW-0238">DNA-binding</keyword>
<keyword id="KW-0536">Nodulation</keyword>
<keyword id="KW-0614">Plasmid</keyword>
<keyword id="KW-1185">Reference proteome</keyword>
<keyword id="KW-0804">Transcription</keyword>
<keyword id="KW-0805">Transcription regulation</keyword>
<dbReference type="EMBL" id="U00090">
    <property type="protein sequence ID" value="AAB91824.1"/>
    <property type="molecule type" value="Genomic_DNA"/>
</dbReference>
<dbReference type="RefSeq" id="NP_444027.1">
    <property type="nucleotide sequence ID" value="NC_000914.2"/>
</dbReference>
<dbReference type="SMR" id="P55619"/>
<dbReference type="KEGG" id="rhi:NGR_a01980"/>
<dbReference type="PATRIC" id="fig|394.7.peg.202"/>
<dbReference type="eggNOG" id="COG0583">
    <property type="taxonomic scope" value="Bacteria"/>
</dbReference>
<dbReference type="HOGENOM" id="CLU_039613_39_0_5"/>
<dbReference type="OrthoDB" id="528082at2"/>
<dbReference type="Proteomes" id="UP000001054">
    <property type="component" value="Plasmid pNGR234a"/>
</dbReference>
<dbReference type="GO" id="GO:0003677">
    <property type="term" value="F:DNA binding"/>
    <property type="evidence" value="ECO:0007669"/>
    <property type="project" value="UniProtKB-KW"/>
</dbReference>
<dbReference type="GO" id="GO:0003700">
    <property type="term" value="F:DNA-binding transcription factor activity"/>
    <property type="evidence" value="ECO:0007669"/>
    <property type="project" value="InterPro"/>
</dbReference>
<dbReference type="Gene3D" id="3.40.190.10">
    <property type="entry name" value="Periplasmic binding protein-like II"/>
    <property type="match status" value="2"/>
</dbReference>
<dbReference type="Gene3D" id="1.10.10.10">
    <property type="entry name" value="Winged helix-like DNA-binding domain superfamily/Winged helix DNA-binding domain"/>
    <property type="match status" value="1"/>
</dbReference>
<dbReference type="InterPro" id="IPR050389">
    <property type="entry name" value="LysR-type_TF"/>
</dbReference>
<dbReference type="InterPro" id="IPR005119">
    <property type="entry name" value="LysR_subst-bd"/>
</dbReference>
<dbReference type="InterPro" id="IPR000847">
    <property type="entry name" value="Tscrpt_reg_HTH_LysR"/>
</dbReference>
<dbReference type="InterPro" id="IPR036388">
    <property type="entry name" value="WH-like_DNA-bd_sf"/>
</dbReference>
<dbReference type="InterPro" id="IPR036390">
    <property type="entry name" value="WH_DNA-bd_sf"/>
</dbReference>
<dbReference type="PANTHER" id="PTHR30118">
    <property type="entry name" value="HTH-TYPE TRANSCRIPTIONAL REGULATOR LEUO-RELATED"/>
    <property type="match status" value="1"/>
</dbReference>
<dbReference type="PANTHER" id="PTHR30118:SF15">
    <property type="entry name" value="TRANSCRIPTIONAL REGULATORY PROTEIN"/>
    <property type="match status" value="1"/>
</dbReference>
<dbReference type="Pfam" id="PF00126">
    <property type="entry name" value="HTH_1"/>
    <property type="match status" value="1"/>
</dbReference>
<dbReference type="Pfam" id="PF03466">
    <property type="entry name" value="LysR_substrate"/>
    <property type="match status" value="1"/>
</dbReference>
<dbReference type="PRINTS" id="PR00039">
    <property type="entry name" value="HTHLYSR"/>
</dbReference>
<dbReference type="SUPFAM" id="SSF53850">
    <property type="entry name" value="Periplasmic binding protein-like II"/>
    <property type="match status" value="1"/>
</dbReference>
<dbReference type="SUPFAM" id="SSF46785">
    <property type="entry name" value="Winged helix' DNA-binding domain"/>
    <property type="match status" value="1"/>
</dbReference>
<dbReference type="PROSITE" id="PS50931">
    <property type="entry name" value="HTH_LYSR"/>
    <property type="match status" value="1"/>
</dbReference>
<organism>
    <name type="scientific">Sinorhizobium fredii (strain NBRC 101917 / NGR234)</name>
    <dbReference type="NCBI Taxonomy" id="394"/>
    <lineage>
        <taxon>Bacteria</taxon>
        <taxon>Pseudomonadati</taxon>
        <taxon>Pseudomonadota</taxon>
        <taxon>Alphaproteobacteria</taxon>
        <taxon>Hyphomicrobiales</taxon>
        <taxon>Rhizobiaceae</taxon>
        <taxon>Sinorhizobium/Ensifer group</taxon>
        <taxon>Sinorhizobium</taxon>
    </lineage>
</organism>
<protein>
    <recommendedName>
        <fullName>HTH-type transcriptional regulator SyrM 1</fullName>
    </recommendedName>
    <alternativeName>
        <fullName>Symbiotic regulator homolog 1</fullName>
    </alternativeName>
</protein>
<geneLocation type="plasmid">
    <name>sym pNGR234a</name>
</geneLocation>
<accession>P55619</accession>
<feature type="chain" id="PRO_0000105754" description="HTH-type transcriptional regulator SyrM 1">
    <location>
        <begin position="1"/>
        <end position="338"/>
    </location>
</feature>
<feature type="domain" description="HTH lysR-type" evidence="1">
    <location>
        <begin position="35"/>
        <end position="92"/>
    </location>
</feature>
<feature type="DNA-binding region" description="H-T-H motif" evidence="1">
    <location>
        <begin position="52"/>
        <end position="72"/>
    </location>
</feature>